<organism>
    <name type="scientific">Shewanella sp. (strain MR-7)</name>
    <dbReference type="NCBI Taxonomy" id="60481"/>
    <lineage>
        <taxon>Bacteria</taxon>
        <taxon>Pseudomonadati</taxon>
        <taxon>Pseudomonadota</taxon>
        <taxon>Gammaproteobacteria</taxon>
        <taxon>Alteromonadales</taxon>
        <taxon>Shewanellaceae</taxon>
        <taxon>Shewanella</taxon>
    </lineage>
</organism>
<protein>
    <recommendedName>
        <fullName evidence="1">UPF0312 protein Shewmr7_1249</fullName>
    </recommendedName>
</protein>
<reference key="1">
    <citation type="submission" date="2006-08" db="EMBL/GenBank/DDBJ databases">
        <title>Complete sequence of chromosome 1 of Shewanella sp. MR-7.</title>
        <authorList>
            <person name="Copeland A."/>
            <person name="Lucas S."/>
            <person name="Lapidus A."/>
            <person name="Barry K."/>
            <person name="Detter J.C."/>
            <person name="Glavina del Rio T."/>
            <person name="Hammon N."/>
            <person name="Israni S."/>
            <person name="Dalin E."/>
            <person name="Tice H."/>
            <person name="Pitluck S."/>
            <person name="Kiss H."/>
            <person name="Brettin T."/>
            <person name="Bruce D."/>
            <person name="Han C."/>
            <person name="Tapia R."/>
            <person name="Gilna P."/>
            <person name="Schmutz J."/>
            <person name="Larimer F."/>
            <person name="Land M."/>
            <person name="Hauser L."/>
            <person name="Kyrpides N."/>
            <person name="Mikhailova N."/>
            <person name="Nealson K."/>
            <person name="Konstantinidis K."/>
            <person name="Klappenbach J."/>
            <person name="Tiedje J."/>
            <person name="Richardson P."/>
        </authorList>
    </citation>
    <scope>NUCLEOTIDE SEQUENCE [LARGE SCALE GENOMIC DNA]</scope>
    <source>
        <strain>MR-7</strain>
    </source>
</reference>
<gene>
    <name type="ordered locus">Shewmr7_1249</name>
</gene>
<comment type="subcellular location">
    <subcellularLocation>
        <location evidence="1">Periplasm</location>
    </subcellularLocation>
</comment>
<comment type="similarity">
    <text evidence="1">Belongs to the UPF0312 family. Type 1 subfamily.</text>
</comment>
<dbReference type="EMBL" id="CP000444">
    <property type="protein sequence ID" value="ABI42248.1"/>
    <property type="molecule type" value="Genomic_DNA"/>
</dbReference>
<dbReference type="SMR" id="Q0HXA7"/>
<dbReference type="KEGG" id="shm:Shewmr7_1249"/>
<dbReference type="HOGENOM" id="CLU_071003_1_2_6"/>
<dbReference type="GO" id="GO:0042597">
    <property type="term" value="C:periplasmic space"/>
    <property type="evidence" value="ECO:0007669"/>
    <property type="project" value="UniProtKB-SubCell"/>
</dbReference>
<dbReference type="Gene3D" id="2.40.128.110">
    <property type="entry name" value="Lipid/polyisoprenoid-binding, YceI-like"/>
    <property type="match status" value="1"/>
</dbReference>
<dbReference type="HAMAP" id="MF_00780">
    <property type="entry name" value="UPF0312"/>
    <property type="match status" value="1"/>
</dbReference>
<dbReference type="InterPro" id="IPR007372">
    <property type="entry name" value="Lipid/polyisoprenoid-bd_YceI"/>
</dbReference>
<dbReference type="InterPro" id="IPR036761">
    <property type="entry name" value="TTHA0802/YceI-like_sf"/>
</dbReference>
<dbReference type="InterPro" id="IPR023480">
    <property type="entry name" value="UPF0312/YceI"/>
</dbReference>
<dbReference type="NCBIfam" id="NF002994">
    <property type="entry name" value="PRK03757.1"/>
    <property type="match status" value="1"/>
</dbReference>
<dbReference type="PANTHER" id="PTHR34406">
    <property type="entry name" value="PROTEIN YCEI"/>
    <property type="match status" value="1"/>
</dbReference>
<dbReference type="PANTHER" id="PTHR34406:SF1">
    <property type="entry name" value="PROTEIN YCEI"/>
    <property type="match status" value="1"/>
</dbReference>
<dbReference type="Pfam" id="PF04264">
    <property type="entry name" value="YceI"/>
    <property type="match status" value="1"/>
</dbReference>
<dbReference type="SMART" id="SM00867">
    <property type="entry name" value="YceI"/>
    <property type="match status" value="1"/>
</dbReference>
<dbReference type="SUPFAM" id="SSF101874">
    <property type="entry name" value="YceI-like"/>
    <property type="match status" value="1"/>
</dbReference>
<evidence type="ECO:0000255" key="1">
    <source>
        <dbReference type="HAMAP-Rule" id="MF_00780"/>
    </source>
</evidence>
<name>Y1249_SHESR</name>
<accession>Q0HXA7</accession>
<proteinExistence type="inferred from homology"/>
<feature type="signal peptide" evidence="1">
    <location>
        <begin position="1"/>
        <end position="22"/>
    </location>
</feature>
<feature type="chain" id="PRO_5000128703" description="UPF0312 protein Shewmr7_1249">
    <location>
        <begin position="23"/>
        <end position="191"/>
    </location>
</feature>
<keyword id="KW-0574">Periplasm</keyword>
<keyword id="KW-0732">Signal</keyword>
<sequence>MKKQLLAALIGGFLLAPMAASAADYVIDREGAHASITFKVSHLGYSYVVGRFNDFSGDFSYDAKNPTAAKVNVKVNTLSVDSNHAERDKHIRSGDFLNTAKFAEATFVSTSVEDKGNGDMVITGNFTLNGVTKPLAIQAHAVGEGQDPWGGYRAGFTGTTTFAMKDYGIKMDLGPASANVELDLVVEGVRK</sequence>